<name>SYI_ECOL6</name>
<dbReference type="EC" id="6.1.1.5" evidence="1"/>
<dbReference type="EMBL" id="AE014075">
    <property type="protein sequence ID" value="AAN78530.1"/>
    <property type="molecule type" value="Genomic_DNA"/>
</dbReference>
<dbReference type="RefSeq" id="WP_001286823.1">
    <property type="nucleotide sequence ID" value="NZ_CP051263.1"/>
</dbReference>
<dbReference type="SMR" id="Q8FLB7"/>
<dbReference type="STRING" id="199310.c0030"/>
<dbReference type="KEGG" id="ecc:c0030"/>
<dbReference type="eggNOG" id="COG0060">
    <property type="taxonomic scope" value="Bacteria"/>
</dbReference>
<dbReference type="HOGENOM" id="CLU_001493_7_1_6"/>
<dbReference type="BioCyc" id="ECOL199310:C0030-MONOMER"/>
<dbReference type="Proteomes" id="UP000001410">
    <property type="component" value="Chromosome"/>
</dbReference>
<dbReference type="GO" id="GO:0005829">
    <property type="term" value="C:cytosol"/>
    <property type="evidence" value="ECO:0007669"/>
    <property type="project" value="TreeGrafter"/>
</dbReference>
<dbReference type="GO" id="GO:0002161">
    <property type="term" value="F:aminoacyl-tRNA deacylase activity"/>
    <property type="evidence" value="ECO:0007669"/>
    <property type="project" value="InterPro"/>
</dbReference>
<dbReference type="GO" id="GO:0005524">
    <property type="term" value="F:ATP binding"/>
    <property type="evidence" value="ECO:0007669"/>
    <property type="project" value="UniProtKB-UniRule"/>
</dbReference>
<dbReference type="GO" id="GO:0004822">
    <property type="term" value="F:isoleucine-tRNA ligase activity"/>
    <property type="evidence" value="ECO:0007669"/>
    <property type="project" value="UniProtKB-UniRule"/>
</dbReference>
<dbReference type="GO" id="GO:0000049">
    <property type="term" value="F:tRNA binding"/>
    <property type="evidence" value="ECO:0007669"/>
    <property type="project" value="InterPro"/>
</dbReference>
<dbReference type="GO" id="GO:0008270">
    <property type="term" value="F:zinc ion binding"/>
    <property type="evidence" value="ECO:0007669"/>
    <property type="project" value="UniProtKB-UniRule"/>
</dbReference>
<dbReference type="GO" id="GO:0006428">
    <property type="term" value="P:isoleucyl-tRNA aminoacylation"/>
    <property type="evidence" value="ECO:0007669"/>
    <property type="project" value="UniProtKB-UniRule"/>
</dbReference>
<dbReference type="CDD" id="cd07960">
    <property type="entry name" value="Anticodon_Ia_Ile_BEm"/>
    <property type="match status" value="1"/>
</dbReference>
<dbReference type="CDD" id="cd00818">
    <property type="entry name" value="IleRS_core"/>
    <property type="match status" value="1"/>
</dbReference>
<dbReference type="FunFam" id="1.10.730.20:FF:000001">
    <property type="entry name" value="Isoleucine--tRNA ligase"/>
    <property type="match status" value="1"/>
</dbReference>
<dbReference type="FunFam" id="3.40.50.620:FF:000042">
    <property type="entry name" value="Isoleucine--tRNA ligase"/>
    <property type="match status" value="1"/>
</dbReference>
<dbReference type="FunFam" id="3.40.50.620:FF:000048">
    <property type="entry name" value="Isoleucine--tRNA ligase"/>
    <property type="match status" value="1"/>
</dbReference>
<dbReference type="FunFam" id="3.90.740.10:FF:000002">
    <property type="entry name" value="Isoleucine--tRNA ligase"/>
    <property type="match status" value="1"/>
</dbReference>
<dbReference type="Gene3D" id="1.10.730.20">
    <property type="match status" value="1"/>
</dbReference>
<dbReference type="Gene3D" id="3.40.50.620">
    <property type="entry name" value="HUPs"/>
    <property type="match status" value="2"/>
</dbReference>
<dbReference type="Gene3D" id="3.90.740.10">
    <property type="entry name" value="Valyl/Leucyl/Isoleucyl-tRNA synthetase, editing domain"/>
    <property type="match status" value="1"/>
</dbReference>
<dbReference type="HAMAP" id="MF_02002">
    <property type="entry name" value="Ile_tRNA_synth_type1"/>
    <property type="match status" value="1"/>
</dbReference>
<dbReference type="InterPro" id="IPR001412">
    <property type="entry name" value="aa-tRNA-synth_I_CS"/>
</dbReference>
<dbReference type="InterPro" id="IPR002300">
    <property type="entry name" value="aa-tRNA-synth_Ia"/>
</dbReference>
<dbReference type="InterPro" id="IPR033708">
    <property type="entry name" value="Anticodon_Ile_BEm"/>
</dbReference>
<dbReference type="InterPro" id="IPR002301">
    <property type="entry name" value="Ile-tRNA-ligase"/>
</dbReference>
<dbReference type="InterPro" id="IPR023585">
    <property type="entry name" value="Ile-tRNA-ligase_type1"/>
</dbReference>
<dbReference type="InterPro" id="IPR050081">
    <property type="entry name" value="Ile-tRNA_ligase"/>
</dbReference>
<dbReference type="InterPro" id="IPR013155">
    <property type="entry name" value="M/V/L/I-tRNA-synth_anticd-bd"/>
</dbReference>
<dbReference type="InterPro" id="IPR014729">
    <property type="entry name" value="Rossmann-like_a/b/a_fold"/>
</dbReference>
<dbReference type="InterPro" id="IPR009080">
    <property type="entry name" value="tRNAsynth_Ia_anticodon-bd"/>
</dbReference>
<dbReference type="InterPro" id="IPR009008">
    <property type="entry name" value="Val/Leu/Ile-tRNA-synth_edit"/>
</dbReference>
<dbReference type="InterPro" id="IPR010663">
    <property type="entry name" value="Znf_FPG/IleRS"/>
</dbReference>
<dbReference type="NCBIfam" id="TIGR00392">
    <property type="entry name" value="ileS"/>
    <property type="match status" value="1"/>
</dbReference>
<dbReference type="PANTHER" id="PTHR42765:SF1">
    <property type="entry name" value="ISOLEUCINE--TRNA LIGASE, MITOCHONDRIAL"/>
    <property type="match status" value="1"/>
</dbReference>
<dbReference type="PANTHER" id="PTHR42765">
    <property type="entry name" value="SOLEUCYL-TRNA SYNTHETASE"/>
    <property type="match status" value="1"/>
</dbReference>
<dbReference type="Pfam" id="PF08264">
    <property type="entry name" value="Anticodon_1"/>
    <property type="match status" value="1"/>
</dbReference>
<dbReference type="Pfam" id="PF00133">
    <property type="entry name" value="tRNA-synt_1"/>
    <property type="match status" value="1"/>
</dbReference>
<dbReference type="Pfam" id="PF06827">
    <property type="entry name" value="zf-FPG_IleRS"/>
    <property type="match status" value="1"/>
</dbReference>
<dbReference type="PRINTS" id="PR00984">
    <property type="entry name" value="TRNASYNTHILE"/>
</dbReference>
<dbReference type="SUPFAM" id="SSF47323">
    <property type="entry name" value="Anticodon-binding domain of a subclass of class I aminoacyl-tRNA synthetases"/>
    <property type="match status" value="1"/>
</dbReference>
<dbReference type="SUPFAM" id="SSF52374">
    <property type="entry name" value="Nucleotidylyl transferase"/>
    <property type="match status" value="1"/>
</dbReference>
<dbReference type="SUPFAM" id="SSF50677">
    <property type="entry name" value="ValRS/IleRS/LeuRS editing domain"/>
    <property type="match status" value="1"/>
</dbReference>
<dbReference type="PROSITE" id="PS00178">
    <property type="entry name" value="AA_TRNA_LIGASE_I"/>
    <property type="match status" value="1"/>
</dbReference>
<gene>
    <name evidence="1" type="primary">ileS</name>
    <name type="ordered locus">c0030</name>
</gene>
<feature type="chain" id="PRO_0000098386" description="Isoleucine--tRNA ligase">
    <location>
        <begin position="1"/>
        <end position="938"/>
    </location>
</feature>
<feature type="short sequence motif" description="'HIGH' region">
    <location>
        <begin position="58"/>
        <end position="68"/>
    </location>
</feature>
<feature type="short sequence motif" description="'KMSKS' region">
    <location>
        <begin position="602"/>
        <end position="606"/>
    </location>
</feature>
<feature type="binding site" evidence="1">
    <location>
        <position position="561"/>
    </location>
    <ligand>
        <name>L-isoleucyl-5'-AMP</name>
        <dbReference type="ChEBI" id="CHEBI:178002"/>
    </ligand>
</feature>
<feature type="binding site" evidence="1">
    <location>
        <position position="605"/>
    </location>
    <ligand>
        <name>ATP</name>
        <dbReference type="ChEBI" id="CHEBI:30616"/>
    </ligand>
</feature>
<feature type="binding site" evidence="1">
    <location>
        <position position="901"/>
    </location>
    <ligand>
        <name>Zn(2+)</name>
        <dbReference type="ChEBI" id="CHEBI:29105"/>
    </ligand>
</feature>
<feature type="binding site" evidence="1">
    <location>
        <position position="904"/>
    </location>
    <ligand>
        <name>Zn(2+)</name>
        <dbReference type="ChEBI" id="CHEBI:29105"/>
    </ligand>
</feature>
<feature type="binding site" evidence="1">
    <location>
        <position position="921"/>
    </location>
    <ligand>
        <name>Zn(2+)</name>
        <dbReference type="ChEBI" id="CHEBI:29105"/>
    </ligand>
</feature>
<feature type="binding site" evidence="1">
    <location>
        <position position="924"/>
    </location>
    <ligand>
        <name>Zn(2+)</name>
        <dbReference type="ChEBI" id="CHEBI:29105"/>
    </ligand>
</feature>
<feature type="modified residue" description="N6-acetyllysine" evidence="1">
    <location>
        <position position="183"/>
    </location>
</feature>
<protein>
    <recommendedName>
        <fullName evidence="1">Isoleucine--tRNA ligase</fullName>
        <ecNumber evidence="1">6.1.1.5</ecNumber>
    </recommendedName>
    <alternativeName>
        <fullName evidence="1">Isoleucyl-tRNA synthetase</fullName>
        <shortName evidence="1">IleRS</shortName>
    </alternativeName>
</protein>
<sequence length="938" mass="104369">MSDYKSTLNLPETGFPMRGDLAKREPGMLARWTDDDLYGIIRAAKKGKKTFILHDGPPYANGSIHIGHSVNKILKDIIIKSKGLSGYDSPYVPGWDCHGLPIELKVEQEYGKPGEKFTAAEFRAKCREYAATQVDGQRKDFIRLGVLGDWSHPYLTMDFKTEANIIRALGKIIGNGHLHKGAKPVHWCVDCRSALAEAEVEYYDKTSPSIDVAFQAVDQDALKTKFGVSNVNGPISLVIWTTTPWTLPANRAISIAPDFDYALVQIDGQAVILAKDLVESVMQRIGVSDYTILGTVKGAELELLRFTHPFMDFDVPAILGDHVTLDAGTGAVHTAPGHGPDDYVIGQKYGLETANPVGPDGTYLPGTYPTLDGVNVFKANDIVIALLQEKGALLHVEKMQHSYPCCWRHKTPIIFRATPQWFVSMDQKGLRAQSLKEIKGVQWIPDWGQARIESMVANRPDWCISRQRTWGVPMSLFVHKDTEELHPRTLELMEEVAKRVEVDGIQAWWDLDAKEILGDEADQYVKVPDTLDVWFDSGSTHSSVVDVRPEFAGHAADMYLEGSDQHRGWFMSSLMISTAMKGKAPYRQVLTHGFTVDGQGRKMSKSIGNTVSPQDVMNKLGADILRLWVASTDYTGEMAVSDEILKRAADSYRRIRNTARFLLANLNGFDPAKDMVKPEEMVVLDRWAVGCAKAAQEDILKAYEAYDFHEVVQRLMRFCSVEMGSFYLDIIKDRQYTAKADSVARRSCQTALYHIAEALVRWMAPILSFTADEVWGYLPGEREKYVFTGEWYEGLFGLADSEAMNDAFWDELLKVRGEVNKVIEQARADKKVGGSLEAAVTLYAEPELAAKLTALGDELRFVLLTSGATVADYNDAPADAQQSEVLKGLKVALSKAEGEKCPRCWHYTQDVGKVAEHAEICGRCVSNVAGDGEKRKFA</sequence>
<keyword id="KW-0007">Acetylation</keyword>
<keyword id="KW-0030">Aminoacyl-tRNA synthetase</keyword>
<keyword id="KW-0067">ATP-binding</keyword>
<keyword id="KW-0963">Cytoplasm</keyword>
<keyword id="KW-0436">Ligase</keyword>
<keyword id="KW-0479">Metal-binding</keyword>
<keyword id="KW-0547">Nucleotide-binding</keyword>
<keyword id="KW-0648">Protein biosynthesis</keyword>
<keyword id="KW-1185">Reference proteome</keyword>
<keyword id="KW-0862">Zinc</keyword>
<accession>Q8FLB7</accession>
<organism>
    <name type="scientific">Escherichia coli O6:H1 (strain CFT073 / ATCC 700928 / UPEC)</name>
    <dbReference type="NCBI Taxonomy" id="199310"/>
    <lineage>
        <taxon>Bacteria</taxon>
        <taxon>Pseudomonadati</taxon>
        <taxon>Pseudomonadota</taxon>
        <taxon>Gammaproteobacteria</taxon>
        <taxon>Enterobacterales</taxon>
        <taxon>Enterobacteriaceae</taxon>
        <taxon>Escherichia</taxon>
    </lineage>
</organism>
<comment type="function">
    <text evidence="1">Catalyzes the attachment of isoleucine to tRNA(Ile). As IleRS can inadvertently accommodate and process structurally similar amino acids such as valine, to avoid such errors it has two additional distinct tRNA(Ile)-dependent editing activities. One activity is designated as 'pretransfer' editing and involves the hydrolysis of activated Val-AMP. The other activity is designated 'posttransfer' editing and involves deacylation of mischarged Val-tRNA(Ile).</text>
</comment>
<comment type="catalytic activity">
    <reaction evidence="1">
        <text>tRNA(Ile) + L-isoleucine + ATP = L-isoleucyl-tRNA(Ile) + AMP + diphosphate</text>
        <dbReference type="Rhea" id="RHEA:11060"/>
        <dbReference type="Rhea" id="RHEA-COMP:9666"/>
        <dbReference type="Rhea" id="RHEA-COMP:9695"/>
        <dbReference type="ChEBI" id="CHEBI:30616"/>
        <dbReference type="ChEBI" id="CHEBI:33019"/>
        <dbReference type="ChEBI" id="CHEBI:58045"/>
        <dbReference type="ChEBI" id="CHEBI:78442"/>
        <dbReference type="ChEBI" id="CHEBI:78528"/>
        <dbReference type="ChEBI" id="CHEBI:456215"/>
        <dbReference type="EC" id="6.1.1.5"/>
    </reaction>
</comment>
<comment type="cofactor">
    <cofactor evidence="1">
        <name>Zn(2+)</name>
        <dbReference type="ChEBI" id="CHEBI:29105"/>
    </cofactor>
    <text evidence="1">Binds 1 zinc ion per subunit.</text>
</comment>
<comment type="subunit">
    <text evidence="1">Monomer.</text>
</comment>
<comment type="subcellular location">
    <subcellularLocation>
        <location evidence="1">Cytoplasm</location>
    </subcellularLocation>
</comment>
<comment type="domain">
    <text evidence="1">IleRS has two distinct active sites: one for aminoacylation and one for editing. The misactivated valine is translocated from the active site to the editing site, which sterically excludes the correctly activated isoleucine. The single editing site contains two valyl binding pockets, one specific for each substrate (Val-AMP or Val-tRNA(Ile)).</text>
</comment>
<comment type="similarity">
    <text evidence="1">Belongs to the class-I aminoacyl-tRNA synthetase family. IleS type 1 subfamily.</text>
</comment>
<proteinExistence type="inferred from homology"/>
<reference key="1">
    <citation type="journal article" date="2002" name="Proc. Natl. Acad. Sci. U.S.A.">
        <title>Extensive mosaic structure revealed by the complete genome sequence of uropathogenic Escherichia coli.</title>
        <authorList>
            <person name="Welch R.A."/>
            <person name="Burland V."/>
            <person name="Plunkett G. III"/>
            <person name="Redford P."/>
            <person name="Roesch P."/>
            <person name="Rasko D."/>
            <person name="Buckles E.L."/>
            <person name="Liou S.-R."/>
            <person name="Boutin A."/>
            <person name="Hackett J."/>
            <person name="Stroud D."/>
            <person name="Mayhew G.F."/>
            <person name="Rose D.J."/>
            <person name="Zhou S."/>
            <person name="Schwartz D.C."/>
            <person name="Perna N.T."/>
            <person name="Mobley H.L.T."/>
            <person name="Donnenberg M.S."/>
            <person name="Blattner F.R."/>
        </authorList>
    </citation>
    <scope>NUCLEOTIDE SEQUENCE [LARGE SCALE GENOMIC DNA]</scope>
    <source>
        <strain>CFT073 / ATCC 700928 / UPEC</strain>
    </source>
</reference>
<evidence type="ECO:0000255" key="1">
    <source>
        <dbReference type="HAMAP-Rule" id="MF_02002"/>
    </source>
</evidence>